<comment type="function">
    <text evidence="1">Catalyzes the conversion of urocanate to 4-imidazolone-5-propionate.</text>
</comment>
<comment type="catalytic activity">
    <reaction evidence="1">
        <text>4-imidazolone-5-propanoate = trans-urocanate + H2O</text>
        <dbReference type="Rhea" id="RHEA:13101"/>
        <dbReference type="ChEBI" id="CHEBI:15377"/>
        <dbReference type="ChEBI" id="CHEBI:17771"/>
        <dbReference type="ChEBI" id="CHEBI:77893"/>
        <dbReference type="EC" id="4.2.1.49"/>
    </reaction>
</comment>
<comment type="cofactor">
    <cofactor evidence="1">
        <name>NAD(+)</name>
        <dbReference type="ChEBI" id="CHEBI:57540"/>
    </cofactor>
    <text evidence="1">Binds 1 NAD(+) per subunit.</text>
</comment>
<comment type="pathway">
    <text evidence="1">Amino-acid degradation; L-histidine degradation into L-glutamate; N-formimidoyl-L-glutamate from L-histidine: step 2/3.</text>
</comment>
<comment type="subcellular location">
    <subcellularLocation>
        <location evidence="1">Cytoplasm</location>
    </subcellularLocation>
</comment>
<comment type="similarity">
    <text evidence="1">Belongs to the urocanase family.</text>
</comment>
<sequence length="588" mass="63223">MDTPSAAAETSEPSAQWQAYRGAPTGTDIECEGWRQEAALRMLNNNLDPEVAEDPENLVVYGGTGQAARSWDAYDAILDELRTLADAETLLVQSGKPVGVFETHERAPSVLIANSNLVGNWADWEQFHELEAEGKIMYGQMTAGSWAYIGTQGIIQGTFETLAELARDHYPDNDGLRGKIVATAGLGGMGGAQPLAVTMNHGVCIAAEVDEARIDRRIETGYCMERTDDLGEAIERATAAAEAGDPYSVGVHGNAADVLEGMLDRDFVPDVVTDQTSAHDELAGYYPSGYTVADADELRDEDPDAYREASMDTMARHVAAVLAMQDAGAVAFEYGNNIRGQVAAHRGDVTTTAGESHDPFDFPGFVPAYIRPLFCRGKGPFRWVALSGNPADIHRTDRAVTELFPEKDDLHRWIDLAQEHVQFQGLPSRVCWLGYCAADDDLTERARFAVRINELVDNGEIEAPIVVTRDHLDAGSVASPNRETEAMRDGTDAVADWPILNALLNTAAGADIVSVHNGGGVGIGNSLHTNNHVVLDGSDAAAETARRVFTTDPGMGVIRHADAGYADALVEADASGVTVPMRDAEREQ</sequence>
<feature type="chain" id="PRO_0000207370" description="Probable urocanate hydratase">
    <location>
        <begin position="1"/>
        <end position="588"/>
    </location>
</feature>
<feature type="region of interest" description="Disordered" evidence="2">
    <location>
        <begin position="1"/>
        <end position="22"/>
    </location>
</feature>
<feature type="compositionally biased region" description="Low complexity" evidence="2">
    <location>
        <begin position="1"/>
        <end position="15"/>
    </location>
</feature>
<feature type="active site" evidence="1">
    <location>
        <position position="431"/>
    </location>
</feature>
<feature type="binding site" evidence="1">
    <location>
        <begin position="62"/>
        <end position="63"/>
    </location>
    <ligand>
        <name>NAD(+)</name>
        <dbReference type="ChEBI" id="CHEBI:57540"/>
    </ligand>
</feature>
<feature type="binding site" evidence="1">
    <location>
        <position position="140"/>
    </location>
    <ligand>
        <name>NAD(+)</name>
        <dbReference type="ChEBI" id="CHEBI:57540"/>
    </ligand>
</feature>
<feature type="binding site" evidence="1">
    <location>
        <begin position="188"/>
        <end position="190"/>
    </location>
    <ligand>
        <name>NAD(+)</name>
        <dbReference type="ChEBI" id="CHEBI:57540"/>
    </ligand>
</feature>
<feature type="binding site" evidence="1">
    <location>
        <position position="208"/>
    </location>
    <ligand>
        <name>NAD(+)</name>
        <dbReference type="ChEBI" id="CHEBI:57540"/>
    </ligand>
</feature>
<feature type="binding site" evidence="1">
    <location>
        <position position="213"/>
    </location>
    <ligand>
        <name>NAD(+)</name>
        <dbReference type="ChEBI" id="CHEBI:57540"/>
    </ligand>
</feature>
<feature type="binding site" evidence="1">
    <location>
        <begin position="254"/>
        <end position="255"/>
    </location>
    <ligand>
        <name>NAD(+)</name>
        <dbReference type="ChEBI" id="CHEBI:57540"/>
    </ligand>
</feature>
<feature type="binding site" evidence="1">
    <location>
        <begin position="275"/>
        <end position="279"/>
    </location>
    <ligand>
        <name>NAD(+)</name>
        <dbReference type="ChEBI" id="CHEBI:57540"/>
    </ligand>
</feature>
<feature type="binding site" evidence="1">
    <location>
        <position position="334"/>
    </location>
    <ligand>
        <name>NAD(+)</name>
        <dbReference type="ChEBI" id="CHEBI:57540"/>
    </ligand>
</feature>
<feature type="binding site" evidence="1">
    <location>
        <position position="520"/>
    </location>
    <ligand>
        <name>NAD(+)</name>
        <dbReference type="ChEBI" id="CHEBI:57540"/>
    </ligand>
</feature>
<gene>
    <name evidence="1" type="primary">hutU</name>
    <name type="ordered locus">VNG_1208G</name>
</gene>
<reference key="1">
    <citation type="journal article" date="2000" name="Proc. Natl. Acad. Sci. U.S.A.">
        <title>Genome sequence of Halobacterium species NRC-1.</title>
        <authorList>
            <person name="Ng W.V."/>
            <person name="Kennedy S.P."/>
            <person name="Mahairas G.G."/>
            <person name="Berquist B."/>
            <person name="Pan M."/>
            <person name="Shukla H.D."/>
            <person name="Lasky S.R."/>
            <person name="Baliga N.S."/>
            <person name="Thorsson V."/>
            <person name="Sbrogna J."/>
            <person name="Swartzell S."/>
            <person name="Weir D."/>
            <person name="Hall J."/>
            <person name="Dahl T.A."/>
            <person name="Welti R."/>
            <person name="Goo Y.A."/>
            <person name="Leithauser B."/>
            <person name="Keller K."/>
            <person name="Cruz R."/>
            <person name="Danson M.J."/>
            <person name="Hough D.W."/>
            <person name="Maddocks D.G."/>
            <person name="Jablonski P.E."/>
            <person name="Krebs M.P."/>
            <person name="Angevine C.M."/>
            <person name="Dale H."/>
            <person name="Isenbarger T.A."/>
            <person name="Peck R.F."/>
            <person name="Pohlschroder M."/>
            <person name="Spudich J.L."/>
            <person name="Jung K.-H."/>
            <person name="Alam M."/>
            <person name="Freitas T."/>
            <person name="Hou S."/>
            <person name="Daniels C.J."/>
            <person name="Dennis P.P."/>
            <person name="Omer A.D."/>
            <person name="Ebhardt H."/>
            <person name="Lowe T.M."/>
            <person name="Liang P."/>
            <person name="Riley M."/>
            <person name="Hood L."/>
            <person name="DasSarma S."/>
        </authorList>
    </citation>
    <scope>NUCLEOTIDE SEQUENCE [LARGE SCALE GENOMIC DNA]</scope>
    <source>
        <strain>ATCC 700922 / JCM 11081 / NRC-1</strain>
    </source>
</reference>
<keyword id="KW-0963">Cytoplasm</keyword>
<keyword id="KW-0369">Histidine metabolism</keyword>
<keyword id="KW-0456">Lyase</keyword>
<keyword id="KW-0520">NAD</keyword>
<keyword id="KW-1185">Reference proteome</keyword>
<name>HUTU_HALSA</name>
<evidence type="ECO:0000255" key="1">
    <source>
        <dbReference type="HAMAP-Rule" id="MF_00577"/>
    </source>
</evidence>
<evidence type="ECO:0000256" key="2">
    <source>
        <dbReference type="SAM" id="MobiDB-lite"/>
    </source>
</evidence>
<proteinExistence type="inferred from homology"/>
<accession>Q9HQD8</accession>
<dbReference type="EC" id="4.2.1.49" evidence="1"/>
<dbReference type="EMBL" id="AE004437">
    <property type="protein sequence ID" value="AAG19577.1"/>
    <property type="molecule type" value="Genomic_DNA"/>
</dbReference>
<dbReference type="PIR" id="E84276">
    <property type="entry name" value="E84276"/>
</dbReference>
<dbReference type="RefSeq" id="WP_010902873.1">
    <property type="nucleotide sequence ID" value="NC_002607.1"/>
</dbReference>
<dbReference type="SMR" id="Q9HQD8"/>
<dbReference type="STRING" id="64091.VNG_1208G"/>
<dbReference type="PaxDb" id="64091-VNG_1208G"/>
<dbReference type="GeneID" id="68693975"/>
<dbReference type="KEGG" id="hal:VNG_1208G"/>
<dbReference type="PATRIC" id="fig|64091.14.peg.926"/>
<dbReference type="HOGENOM" id="CLU_018868_0_1_2"/>
<dbReference type="InParanoid" id="Q9HQD8"/>
<dbReference type="OrthoDB" id="173478at2157"/>
<dbReference type="PhylomeDB" id="Q9HQD8"/>
<dbReference type="UniPathway" id="UPA00379">
    <property type="reaction ID" value="UER00550"/>
</dbReference>
<dbReference type="Proteomes" id="UP000000554">
    <property type="component" value="Chromosome"/>
</dbReference>
<dbReference type="GO" id="GO:0005737">
    <property type="term" value="C:cytoplasm"/>
    <property type="evidence" value="ECO:0007669"/>
    <property type="project" value="UniProtKB-SubCell"/>
</dbReference>
<dbReference type="GO" id="GO:0016153">
    <property type="term" value="F:urocanate hydratase activity"/>
    <property type="evidence" value="ECO:0000318"/>
    <property type="project" value="GO_Central"/>
</dbReference>
<dbReference type="GO" id="GO:0006548">
    <property type="term" value="P:L-histidine catabolic process"/>
    <property type="evidence" value="ECO:0000318"/>
    <property type="project" value="GO_Central"/>
</dbReference>
<dbReference type="GO" id="GO:0019556">
    <property type="term" value="P:L-histidine catabolic process to glutamate and formamide"/>
    <property type="evidence" value="ECO:0007669"/>
    <property type="project" value="UniProtKB-UniPathway"/>
</dbReference>
<dbReference type="GO" id="GO:0019557">
    <property type="term" value="P:L-histidine catabolic process to glutamate and formate"/>
    <property type="evidence" value="ECO:0007669"/>
    <property type="project" value="UniProtKB-UniPathway"/>
</dbReference>
<dbReference type="FunFam" id="3.40.50.10730:FF:000001">
    <property type="entry name" value="Urocanate hydratase"/>
    <property type="match status" value="1"/>
</dbReference>
<dbReference type="Gene3D" id="3.40.50.10730">
    <property type="entry name" value="Urocanase like domains"/>
    <property type="match status" value="1"/>
</dbReference>
<dbReference type="Gene3D" id="3.40.1770.10">
    <property type="entry name" value="Urocanase superfamily"/>
    <property type="match status" value="1"/>
</dbReference>
<dbReference type="HAMAP" id="MF_00577">
    <property type="entry name" value="HutU"/>
    <property type="match status" value="1"/>
</dbReference>
<dbReference type="InterPro" id="IPR055351">
    <property type="entry name" value="Urocanase"/>
</dbReference>
<dbReference type="InterPro" id="IPR023637">
    <property type="entry name" value="Urocanase-like"/>
</dbReference>
<dbReference type="InterPro" id="IPR035401">
    <property type="entry name" value="Urocanase_C"/>
</dbReference>
<dbReference type="InterPro" id="IPR038364">
    <property type="entry name" value="Urocanase_central_sf"/>
</dbReference>
<dbReference type="InterPro" id="IPR023636">
    <property type="entry name" value="Urocanase_CS"/>
</dbReference>
<dbReference type="InterPro" id="IPR035400">
    <property type="entry name" value="Urocanase_N"/>
</dbReference>
<dbReference type="InterPro" id="IPR035085">
    <property type="entry name" value="Urocanase_Rossmann-like"/>
</dbReference>
<dbReference type="InterPro" id="IPR036190">
    <property type="entry name" value="Urocanase_sf"/>
</dbReference>
<dbReference type="NCBIfam" id="TIGR01228">
    <property type="entry name" value="hutU"/>
    <property type="match status" value="1"/>
</dbReference>
<dbReference type="NCBIfam" id="NF003820">
    <property type="entry name" value="PRK05414.1"/>
    <property type="match status" value="1"/>
</dbReference>
<dbReference type="PANTHER" id="PTHR12216">
    <property type="entry name" value="UROCANATE HYDRATASE"/>
    <property type="match status" value="1"/>
</dbReference>
<dbReference type="PANTHER" id="PTHR12216:SF4">
    <property type="entry name" value="UROCANATE HYDRATASE"/>
    <property type="match status" value="1"/>
</dbReference>
<dbReference type="Pfam" id="PF01175">
    <property type="entry name" value="Urocanase"/>
    <property type="match status" value="1"/>
</dbReference>
<dbReference type="Pfam" id="PF17392">
    <property type="entry name" value="Urocanase_C"/>
    <property type="match status" value="1"/>
</dbReference>
<dbReference type="Pfam" id="PF17391">
    <property type="entry name" value="Urocanase_N"/>
    <property type="match status" value="1"/>
</dbReference>
<dbReference type="PIRSF" id="PIRSF001423">
    <property type="entry name" value="Urocanate_hydrat"/>
    <property type="match status" value="1"/>
</dbReference>
<dbReference type="SUPFAM" id="SSF111326">
    <property type="entry name" value="Urocanase"/>
    <property type="match status" value="1"/>
</dbReference>
<dbReference type="PROSITE" id="PS01233">
    <property type="entry name" value="UROCANASE"/>
    <property type="match status" value="1"/>
</dbReference>
<organism>
    <name type="scientific">Halobacterium salinarum (strain ATCC 700922 / JCM 11081 / NRC-1)</name>
    <name type="common">Halobacterium halobium</name>
    <dbReference type="NCBI Taxonomy" id="64091"/>
    <lineage>
        <taxon>Archaea</taxon>
        <taxon>Methanobacteriati</taxon>
        <taxon>Methanobacteriota</taxon>
        <taxon>Stenosarchaea group</taxon>
        <taxon>Halobacteria</taxon>
        <taxon>Halobacteriales</taxon>
        <taxon>Halobacteriaceae</taxon>
        <taxon>Halobacterium</taxon>
        <taxon>Halobacterium salinarum NRC-34001</taxon>
    </lineage>
</organism>
<protein>
    <recommendedName>
        <fullName evidence="1">Probable urocanate hydratase</fullName>
        <shortName evidence="1">Urocanase</shortName>
        <ecNumber evidence="1">4.2.1.49</ecNumber>
    </recommendedName>
    <alternativeName>
        <fullName evidence="1">Imidazolonepropionate hydrolase</fullName>
    </alternativeName>
</protein>